<accession>B7NHA6</accession>
<keyword id="KW-0028">Amino-acid biosynthesis</keyword>
<keyword id="KW-0067">ATP-binding</keyword>
<keyword id="KW-0963">Cytoplasm</keyword>
<keyword id="KW-0418">Kinase</keyword>
<keyword id="KW-0547">Nucleotide-binding</keyword>
<keyword id="KW-0791">Threonine biosynthesis</keyword>
<keyword id="KW-0808">Transferase</keyword>
<evidence type="ECO:0000255" key="1">
    <source>
        <dbReference type="HAMAP-Rule" id="MF_00384"/>
    </source>
</evidence>
<feature type="chain" id="PRO_1000122418" description="Homoserine kinase">
    <location>
        <begin position="1"/>
        <end position="310"/>
    </location>
</feature>
<feature type="binding site" evidence="1">
    <location>
        <begin position="91"/>
        <end position="101"/>
    </location>
    <ligand>
        <name>ATP</name>
        <dbReference type="ChEBI" id="CHEBI:30616"/>
    </ligand>
</feature>
<gene>
    <name evidence="1" type="primary">thrB</name>
    <name type="ordered locus">ECIAI39_0002</name>
</gene>
<protein>
    <recommendedName>
        <fullName evidence="1">Homoserine kinase</fullName>
        <shortName evidence="1">HK</shortName>
        <shortName evidence="1">HSK</shortName>
        <ecNumber evidence="1">2.7.1.39</ecNumber>
    </recommendedName>
</protein>
<proteinExistence type="inferred from homology"/>
<comment type="function">
    <text evidence="1">Catalyzes the ATP-dependent phosphorylation of L-homoserine to L-homoserine phosphate.</text>
</comment>
<comment type="catalytic activity">
    <reaction evidence="1">
        <text>L-homoserine + ATP = O-phospho-L-homoserine + ADP + H(+)</text>
        <dbReference type="Rhea" id="RHEA:13985"/>
        <dbReference type="ChEBI" id="CHEBI:15378"/>
        <dbReference type="ChEBI" id="CHEBI:30616"/>
        <dbReference type="ChEBI" id="CHEBI:57476"/>
        <dbReference type="ChEBI" id="CHEBI:57590"/>
        <dbReference type="ChEBI" id="CHEBI:456216"/>
        <dbReference type="EC" id="2.7.1.39"/>
    </reaction>
</comment>
<comment type="pathway">
    <text evidence="1">Amino-acid biosynthesis; L-threonine biosynthesis; L-threonine from L-aspartate: step 4/5.</text>
</comment>
<comment type="subcellular location">
    <subcellularLocation>
        <location evidence="1">Cytoplasm</location>
    </subcellularLocation>
</comment>
<comment type="similarity">
    <text evidence="1">Belongs to the GHMP kinase family. Homoserine kinase subfamily.</text>
</comment>
<organism>
    <name type="scientific">Escherichia coli O7:K1 (strain IAI39 / ExPEC)</name>
    <dbReference type="NCBI Taxonomy" id="585057"/>
    <lineage>
        <taxon>Bacteria</taxon>
        <taxon>Pseudomonadati</taxon>
        <taxon>Pseudomonadota</taxon>
        <taxon>Gammaproteobacteria</taxon>
        <taxon>Enterobacterales</taxon>
        <taxon>Enterobacteriaceae</taxon>
        <taxon>Escherichia</taxon>
    </lineage>
</organism>
<name>KHSE_ECO7I</name>
<reference key="1">
    <citation type="journal article" date="2009" name="PLoS Genet.">
        <title>Organised genome dynamics in the Escherichia coli species results in highly diverse adaptive paths.</title>
        <authorList>
            <person name="Touchon M."/>
            <person name="Hoede C."/>
            <person name="Tenaillon O."/>
            <person name="Barbe V."/>
            <person name="Baeriswyl S."/>
            <person name="Bidet P."/>
            <person name="Bingen E."/>
            <person name="Bonacorsi S."/>
            <person name="Bouchier C."/>
            <person name="Bouvet O."/>
            <person name="Calteau A."/>
            <person name="Chiapello H."/>
            <person name="Clermont O."/>
            <person name="Cruveiller S."/>
            <person name="Danchin A."/>
            <person name="Diard M."/>
            <person name="Dossat C."/>
            <person name="Karoui M.E."/>
            <person name="Frapy E."/>
            <person name="Garry L."/>
            <person name="Ghigo J.M."/>
            <person name="Gilles A.M."/>
            <person name="Johnson J."/>
            <person name="Le Bouguenec C."/>
            <person name="Lescat M."/>
            <person name="Mangenot S."/>
            <person name="Martinez-Jehanne V."/>
            <person name="Matic I."/>
            <person name="Nassif X."/>
            <person name="Oztas S."/>
            <person name="Petit M.A."/>
            <person name="Pichon C."/>
            <person name="Rouy Z."/>
            <person name="Ruf C.S."/>
            <person name="Schneider D."/>
            <person name="Tourret J."/>
            <person name="Vacherie B."/>
            <person name="Vallenet D."/>
            <person name="Medigue C."/>
            <person name="Rocha E.P.C."/>
            <person name="Denamur E."/>
        </authorList>
    </citation>
    <scope>NUCLEOTIDE SEQUENCE [LARGE SCALE GENOMIC DNA]</scope>
    <source>
        <strain>IAI39 / ExPEC</strain>
    </source>
</reference>
<dbReference type="EC" id="2.7.1.39" evidence="1"/>
<dbReference type="EMBL" id="CU928164">
    <property type="protein sequence ID" value="CAR16144.1"/>
    <property type="molecule type" value="Genomic_DNA"/>
</dbReference>
<dbReference type="RefSeq" id="WP_000241660.1">
    <property type="nucleotide sequence ID" value="NC_011750.1"/>
</dbReference>
<dbReference type="RefSeq" id="YP_002406051.1">
    <property type="nucleotide sequence ID" value="NC_011750.1"/>
</dbReference>
<dbReference type="SMR" id="B7NHA6"/>
<dbReference type="STRING" id="585057.ECIAI39_0002"/>
<dbReference type="GeneID" id="75202912"/>
<dbReference type="KEGG" id="ect:ECIAI39_0002"/>
<dbReference type="PATRIC" id="fig|585057.6.peg.2"/>
<dbReference type="HOGENOM" id="CLU_041243_1_1_6"/>
<dbReference type="UniPathway" id="UPA00050">
    <property type="reaction ID" value="UER00064"/>
</dbReference>
<dbReference type="Proteomes" id="UP000000749">
    <property type="component" value="Chromosome"/>
</dbReference>
<dbReference type="GO" id="GO:0005737">
    <property type="term" value="C:cytoplasm"/>
    <property type="evidence" value="ECO:0007669"/>
    <property type="project" value="UniProtKB-SubCell"/>
</dbReference>
<dbReference type="GO" id="GO:0005524">
    <property type="term" value="F:ATP binding"/>
    <property type="evidence" value="ECO:0007669"/>
    <property type="project" value="UniProtKB-UniRule"/>
</dbReference>
<dbReference type="GO" id="GO:0004413">
    <property type="term" value="F:homoserine kinase activity"/>
    <property type="evidence" value="ECO:0007669"/>
    <property type="project" value="UniProtKB-UniRule"/>
</dbReference>
<dbReference type="GO" id="GO:0009088">
    <property type="term" value="P:threonine biosynthetic process"/>
    <property type="evidence" value="ECO:0007669"/>
    <property type="project" value="UniProtKB-UniRule"/>
</dbReference>
<dbReference type="FunFam" id="3.30.230.10:FF:000020">
    <property type="entry name" value="Homoserine kinase"/>
    <property type="match status" value="1"/>
</dbReference>
<dbReference type="FunFam" id="3.30.70.890:FF:000002">
    <property type="entry name" value="Homoserine kinase"/>
    <property type="match status" value="1"/>
</dbReference>
<dbReference type="Gene3D" id="3.30.230.10">
    <property type="match status" value="1"/>
</dbReference>
<dbReference type="Gene3D" id="3.30.70.890">
    <property type="entry name" value="GHMP kinase, C-terminal domain"/>
    <property type="match status" value="1"/>
</dbReference>
<dbReference type="HAMAP" id="MF_00384">
    <property type="entry name" value="Homoser_kinase"/>
    <property type="match status" value="1"/>
</dbReference>
<dbReference type="InterPro" id="IPR013750">
    <property type="entry name" value="GHMP_kinase_C_dom"/>
</dbReference>
<dbReference type="InterPro" id="IPR036554">
    <property type="entry name" value="GHMP_kinase_C_sf"/>
</dbReference>
<dbReference type="InterPro" id="IPR006204">
    <property type="entry name" value="GHMP_kinase_N_dom"/>
</dbReference>
<dbReference type="InterPro" id="IPR006203">
    <property type="entry name" value="GHMP_knse_ATP-bd_CS"/>
</dbReference>
<dbReference type="InterPro" id="IPR000870">
    <property type="entry name" value="Homoserine_kinase"/>
</dbReference>
<dbReference type="InterPro" id="IPR020568">
    <property type="entry name" value="Ribosomal_Su5_D2-typ_SF"/>
</dbReference>
<dbReference type="InterPro" id="IPR014721">
    <property type="entry name" value="Ribsml_uS5_D2-typ_fold_subgr"/>
</dbReference>
<dbReference type="NCBIfam" id="NF002288">
    <property type="entry name" value="PRK01212.1-4"/>
    <property type="match status" value="1"/>
</dbReference>
<dbReference type="NCBIfam" id="TIGR00191">
    <property type="entry name" value="thrB"/>
    <property type="match status" value="1"/>
</dbReference>
<dbReference type="PANTHER" id="PTHR20861:SF1">
    <property type="entry name" value="HOMOSERINE KINASE"/>
    <property type="match status" value="1"/>
</dbReference>
<dbReference type="PANTHER" id="PTHR20861">
    <property type="entry name" value="HOMOSERINE/4-DIPHOSPHOCYTIDYL-2-C-METHYL-D-ERYTHRITOL KINASE"/>
    <property type="match status" value="1"/>
</dbReference>
<dbReference type="Pfam" id="PF08544">
    <property type="entry name" value="GHMP_kinases_C"/>
    <property type="match status" value="1"/>
</dbReference>
<dbReference type="Pfam" id="PF00288">
    <property type="entry name" value="GHMP_kinases_N"/>
    <property type="match status" value="1"/>
</dbReference>
<dbReference type="PIRSF" id="PIRSF000676">
    <property type="entry name" value="Homoser_kin"/>
    <property type="match status" value="1"/>
</dbReference>
<dbReference type="PRINTS" id="PR00958">
    <property type="entry name" value="HOMSERKINASE"/>
</dbReference>
<dbReference type="SUPFAM" id="SSF55060">
    <property type="entry name" value="GHMP Kinase, C-terminal domain"/>
    <property type="match status" value="1"/>
</dbReference>
<dbReference type="SUPFAM" id="SSF54211">
    <property type="entry name" value="Ribosomal protein S5 domain 2-like"/>
    <property type="match status" value="1"/>
</dbReference>
<dbReference type="PROSITE" id="PS00627">
    <property type="entry name" value="GHMP_KINASES_ATP"/>
    <property type="match status" value="1"/>
</dbReference>
<sequence length="310" mass="33610">MVKVYAPASSANMSVGFDVLGAAVTPVDGALLGDVVTVEAAETFSLNNLGRFADKLPSEPRENIVYQCWERFCQELGKQIPVAMTLEKNMPIGSGLGSSACSVVAALMAMNEHCGKPLNDTRLLALMGELEGRISGSIHYDNVAPCFLGGMQLMIEENDIISQQVPGFDEWLWVLAYPGIKVSTAEARAILPAQYRRQDCIAHGRHLAGFIHACYSRQPELAAKLMKDVIAEPYRERLLPGFRQARQAVAEIGAVASGISGSGPTLFALCDKPDTAQRVADWLGKNYLQNQEGFVHICRLDTAGARVLEN</sequence>